<proteinExistence type="evidence at protein level"/>
<organism>
    <name type="scientific">Streptococcus pneumoniae serotype 4 (strain ATCC BAA-334 / TIGR4)</name>
    <dbReference type="NCBI Taxonomy" id="170187"/>
    <lineage>
        <taxon>Bacteria</taxon>
        <taxon>Bacillati</taxon>
        <taxon>Bacillota</taxon>
        <taxon>Bacilli</taxon>
        <taxon>Lactobacillales</taxon>
        <taxon>Streptococcaceae</taxon>
        <taxon>Streptococcus</taxon>
    </lineage>
</organism>
<name>IF1_STRPN</name>
<keyword id="KW-0002">3D-structure</keyword>
<keyword id="KW-0963">Cytoplasm</keyword>
<keyword id="KW-0396">Initiation factor</keyword>
<keyword id="KW-0648">Protein biosynthesis</keyword>
<keyword id="KW-1185">Reference proteome</keyword>
<keyword id="KW-0694">RNA-binding</keyword>
<keyword id="KW-0699">rRNA-binding</keyword>
<gene>
    <name evidence="1" type="primary">infA</name>
    <name type="ordered locus">SP_0232</name>
</gene>
<accession>P65121</accession>
<accession>Q97SU0</accession>
<comment type="function">
    <text evidence="1">One of the essential components for the initiation of protein synthesis. Stabilizes the binding of IF-2 and IF-3 on the 30S subunit to which N-formylmethionyl-tRNA(fMet) subsequently binds. Helps modulate mRNA selection, yielding the 30S pre-initiation complex (PIC). Upon addition of the 50S ribosomal subunit IF-1, IF-2 and IF-3 are released leaving the mature 70S translation initiation complex.</text>
</comment>
<comment type="subunit">
    <text evidence="1">Component of the 30S ribosomal translation pre-initiation complex which assembles on the 30S ribosome in the order IF-2 and IF-3, IF-1 and N-formylmethionyl-tRNA(fMet); mRNA recruitment can occur at any time during PIC assembly.</text>
</comment>
<comment type="subcellular location">
    <subcellularLocation>
        <location evidence="1">Cytoplasm</location>
    </subcellularLocation>
</comment>
<comment type="similarity">
    <text evidence="1">Belongs to the IF-1 family.</text>
</comment>
<dbReference type="EMBL" id="AE005672">
    <property type="protein sequence ID" value="AAK74412.1"/>
    <property type="molecule type" value="Genomic_DNA"/>
</dbReference>
<dbReference type="PIR" id="C95027">
    <property type="entry name" value="C95027"/>
</dbReference>
<dbReference type="RefSeq" id="WP_001029883.1">
    <property type="nucleotide sequence ID" value="NZ_CP155539.1"/>
</dbReference>
<dbReference type="PDB" id="4QL5">
    <property type="method" value="X-ray"/>
    <property type="resolution" value="2.02 A"/>
    <property type="chains" value="A/B=1-72"/>
</dbReference>
<dbReference type="PDBsum" id="4QL5"/>
<dbReference type="SMR" id="P65121"/>
<dbReference type="PaxDb" id="170187-SP_0232"/>
<dbReference type="EnsemblBacteria" id="AAK74412">
    <property type="protein sequence ID" value="AAK74412"/>
    <property type="gene ID" value="SP_0232"/>
</dbReference>
<dbReference type="GeneID" id="93964223"/>
<dbReference type="KEGG" id="spn:SP_0232"/>
<dbReference type="eggNOG" id="COG0361">
    <property type="taxonomic scope" value="Bacteria"/>
</dbReference>
<dbReference type="PhylomeDB" id="P65121"/>
<dbReference type="BioCyc" id="SPNE170187:G1FZB-236-MONOMER"/>
<dbReference type="EvolutionaryTrace" id="P65121"/>
<dbReference type="Proteomes" id="UP000000585">
    <property type="component" value="Chromosome"/>
</dbReference>
<dbReference type="GO" id="GO:0005829">
    <property type="term" value="C:cytosol"/>
    <property type="evidence" value="ECO:0007669"/>
    <property type="project" value="TreeGrafter"/>
</dbReference>
<dbReference type="GO" id="GO:0043022">
    <property type="term" value="F:ribosome binding"/>
    <property type="evidence" value="ECO:0007669"/>
    <property type="project" value="UniProtKB-UniRule"/>
</dbReference>
<dbReference type="GO" id="GO:0019843">
    <property type="term" value="F:rRNA binding"/>
    <property type="evidence" value="ECO:0007669"/>
    <property type="project" value="UniProtKB-UniRule"/>
</dbReference>
<dbReference type="GO" id="GO:0003743">
    <property type="term" value="F:translation initiation factor activity"/>
    <property type="evidence" value="ECO:0007669"/>
    <property type="project" value="UniProtKB-UniRule"/>
</dbReference>
<dbReference type="CDD" id="cd04451">
    <property type="entry name" value="S1_IF1"/>
    <property type="match status" value="1"/>
</dbReference>
<dbReference type="FunFam" id="2.40.50.140:FF:000002">
    <property type="entry name" value="Translation initiation factor IF-1"/>
    <property type="match status" value="1"/>
</dbReference>
<dbReference type="Gene3D" id="2.40.50.140">
    <property type="entry name" value="Nucleic acid-binding proteins"/>
    <property type="match status" value="1"/>
</dbReference>
<dbReference type="HAMAP" id="MF_00075">
    <property type="entry name" value="IF_1"/>
    <property type="match status" value="1"/>
</dbReference>
<dbReference type="InterPro" id="IPR012340">
    <property type="entry name" value="NA-bd_OB-fold"/>
</dbReference>
<dbReference type="InterPro" id="IPR006196">
    <property type="entry name" value="RNA-binding_domain_S1_IF1"/>
</dbReference>
<dbReference type="InterPro" id="IPR003029">
    <property type="entry name" value="S1_domain"/>
</dbReference>
<dbReference type="InterPro" id="IPR004368">
    <property type="entry name" value="TIF_IF1"/>
</dbReference>
<dbReference type="NCBIfam" id="TIGR00008">
    <property type="entry name" value="infA"/>
    <property type="match status" value="1"/>
</dbReference>
<dbReference type="PANTHER" id="PTHR33370">
    <property type="entry name" value="TRANSLATION INITIATION FACTOR IF-1, CHLOROPLASTIC"/>
    <property type="match status" value="1"/>
</dbReference>
<dbReference type="PANTHER" id="PTHR33370:SF1">
    <property type="entry name" value="TRANSLATION INITIATION FACTOR IF-1, CHLOROPLASTIC"/>
    <property type="match status" value="1"/>
</dbReference>
<dbReference type="Pfam" id="PF01176">
    <property type="entry name" value="eIF-1a"/>
    <property type="match status" value="1"/>
</dbReference>
<dbReference type="SMART" id="SM00316">
    <property type="entry name" value="S1"/>
    <property type="match status" value="1"/>
</dbReference>
<dbReference type="SUPFAM" id="SSF50249">
    <property type="entry name" value="Nucleic acid-binding proteins"/>
    <property type="match status" value="1"/>
</dbReference>
<dbReference type="PROSITE" id="PS50832">
    <property type="entry name" value="S1_IF1_TYPE"/>
    <property type="match status" value="1"/>
</dbReference>
<reference key="1">
    <citation type="journal article" date="2001" name="Science">
        <title>Complete genome sequence of a virulent isolate of Streptococcus pneumoniae.</title>
        <authorList>
            <person name="Tettelin H."/>
            <person name="Nelson K.E."/>
            <person name="Paulsen I.T."/>
            <person name="Eisen J.A."/>
            <person name="Read T.D."/>
            <person name="Peterson S.N."/>
            <person name="Heidelberg J.F."/>
            <person name="DeBoy R.T."/>
            <person name="Haft D.H."/>
            <person name="Dodson R.J."/>
            <person name="Durkin A.S."/>
            <person name="Gwinn M.L."/>
            <person name="Kolonay J.F."/>
            <person name="Nelson W.C."/>
            <person name="Peterson J.D."/>
            <person name="Umayam L.A."/>
            <person name="White O."/>
            <person name="Salzberg S.L."/>
            <person name="Lewis M.R."/>
            <person name="Radune D."/>
            <person name="Holtzapple E.K."/>
            <person name="Khouri H.M."/>
            <person name="Wolf A.M."/>
            <person name="Utterback T.R."/>
            <person name="Hansen C.L."/>
            <person name="McDonald L.A."/>
            <person name="Feldblyum T.V."/>
            <person name="Angiuoli S.V."/>
            <person name="Dickinson T."/>
            <person name="Hickey E.K."/>
            <person name="Holt I.E."/>
            <person name="Loftus B.J."/>
            <person name="Yang F."/>
            <person name="Smith H.O."/>
            <person name="Venter J.C."/>
            <person name="Dougherty B.A."/>
            <person name="Morrison D.A."/>
            <person name="Hollingshead S.K."/>
            <person name="Fraser C.M."/>
        </authorList>
    </citation>
    <scope>NUCLEOTIDE SEQUENCE [LARGE SCALE GENOMIC DNA]</scope>
    <source>
        <strain>ATCC BAA-334 / TIGR4</strain>
    </source>
</reference>
<reference key="2">
    <citation type="submission" date="2014-06" db="PDB data bank">
        <title>Crystal structure of translation initiation factor IF-1 from Streptococcus pneumoniae TIGR4.</title>
        <authorList>
            <consortium name="Center for Structural Genomics of Infectious Diseases (CSGID)"/>
            <person name="Stogios P.J."/>
            <person name="Wawrzak Z."/>
            <person name="Onopriyenko O."/>
            <person name="Savchenko A."/>
            <person name="Anderson W.F."/>
        </authorList>
    </citation>
    <scope>X-RAY CRYSTALLOGRAPHY (2.02 ANGSTROMS)</scope>
</reference>
<feature type="chain" id="PRO_0000095879" description="Translation initiation factor IF-1">
    <location>
        <begin position="1"/>
        <end position="72"/>
    </location>
</feature>
<feature type="domain" description="S1-like" evidence="1">
    <location>
        <begin position="1"/>
        <end position="72"/>
    </location>
</feature>
<feature type="strand" evidence="2">
    <location>
        <begin position="7"/>
        <end position="16"/>
    </location>
</feature>
<feature type="strand" evidence="2">
    <location>
        <begin position="22"/>
        <end position="26"/>
    </location>
</feature>
<feature type="strand" evidence="2">
    <location>
        <begin position="31"/>
        <end position="36"/>
    </location>
</feature>
<feature type="helix" evidence="2">
    <location>
        <begin position="38"/>
        <end position="41"/>
    </location>
</feature>
<feature type="turn" evidence="2">
    <location>
        <begin position="42"/>
        <end position="44"/>
    </location>
</feature>
<feature type="strand" evidence="2">
    <location>
        <begin position="52"/>
        <end position="57"/>
    </location>
</feature>
<feature type="strand" evidence="2">
    <location>
        <begin position="64"/>
        <end position="70"/>
    </location>
</feature>
<sequence>MAKDDVIEVEGKVVDTMPNAMFTVELENGHQILATVSGKIRKNYIRILAGDRVTVEMSPYDLTRGRITYRFK</sequence>
<evidence type="ECO:0000255" key="1">
    <source>
        <dbReference type="HAMAP-Rule" id="MF_00075"/>
    </source>
</evidence>
<evidence type="ECO:0007829" key="2">
    <source>
        <dbReference type="PDB" id="4QL5"/>
    </source>
</evidence>
<protein>
    <recommendedName>
        <fullName evidence="1">Translation initiation factor IF-1</fullName>
    </recommendedName>
</protein>